<organism>
    <name type="scientific">Oncorhynchus mykiss</name>
    <name type="common">Rainbow trout</name>
    <name type="synonym">Salmo gairdneri</name>
    <dbReference type="NCBI Taxonomy" id="8022"/>
    <lineage>
        <taxon>Eukaryota</taxon>
        <taxon>Metazoa</taxon>
        <taxon>Chordata</taxon>
        <taxon>Craniata</taxon>
        <taxon>Vertebrata</taxon>
        <taxon>Euteleostomi</taxon>
        <taxon>Actinopterygii</taxon>
        <taxon>Neopterygii</taxon>
        <taxon>Teleostei</taxon>
        <taxon>Protacanthopterygii</taxon>
        <taxon>Salmoniformes</taxon>
        <taxon>Salmonidae</taxon>
        <taxon>Salmoninae</taxon>
        <taxon>Oncorhynchus</taxon>
    </lineage>
</organism>
<feature type="chain" id="PRO_0000197295" description="Metallothionein A">
    <location>
        <begin position="1"/>
        <end position="61"/>
    </location>
</feature>
<feature type="region of interest" description="Beta">
    <location>
        <begin position="1"/>
        <end position="28"/>
    </location>
</feature>
<feature type="region of interest" description="Alpha">
    <location>
        <begin position="29"/>
        <end position="61"/>
    </location>
</feature>
<feature type="binding site" evidence="2">
    <location>
        <position position="4"/>
    </location>
    <ligand>
        <name>a divalent metal cation</name>
        <dbReference type="ChEBI" id="CHEBI:60240"/>
        <label>1</label>
        <note>in cluster B</note>
    </ligand>
</feature>
<feature type="binding site" evidence="2">
    <location>
        <position position="6"/>
    </location>
    <ligand>
        <name>a divalent metal cation</name>
        <dbReference type="ChEBI" id="CHEBI:60240"/>
        <label>1</label>
        <note>in cluster B</note>
    </ligand>
</feature>
<feature type="binding site" evidence="2">
    <location>
        <position position="6"/>
    </location>
    <ligand>
        <name>a divalent metal cation</name>
        <dbReference type="ChEBI" id="CHEBI:60240"/>
        <label>2</label>
        <note>in cluster B</note>
    </ligand>
</feature>
<feature type="binding site" evidence="2">
    <location>
        <position position="12"/>
    </location>
    <ligand>
        <name>a divalent metal cation</name>
        <dbReference type="ChEBI" id="CHEBI:60240"/>
        <label>2</label>
        <note>in cluster B</note>
    </ligand>
</feature>
<feature type="binding site" evidence="2">
    <location>
        <position position="14"/>
    </location>
    <ligand>
        <name>a divalent metal cation</name>
        <dbReference type="ChEBI" id="CHEBI:60240"/>
        <label>2</label>
        <note>in cluster B</note>
    </ligand>
</feature>
<feature type="binding site" evidence="2">
    <location>
        <position position="14"/>
    </location>
    <ligand>
        <name>a divalent metal cation</name>
        <dbReference type="ChEBI" id="CHEBI:60240"/>
        <label>3</label>
        <note>in cluster B</note>
    </ligand>
</feature>
<feature type="binding site" evidence="2">
    <location>
        <position position="18"/>
    </location>
    <ligand>
        <name>a divalent metal cation</name>
        <dbReference type="ChEBI" id="CHEBI:60240"/>
        <label>3</label>
        <note>in cluster B</note>
    </ligand>
</feature>
<feature type="binding site" evidence="2">
    <location>
        <position position="20"/>
    </location>
    <ligand>
        <name>a divalent metal cation</name>
        <dbReference type="ChEBI" id="CHEBI:60240"/>
        <label>1</label>
        <note>in cluster B</note>
    </ligand>
</feature>
<feature type="binding site" evidence="2">
    <location>
        <position position="23"/>
    </location>
    <ligand>
        <name>a divalent metal cation</name>
        <dbReference type="ChEBI" id="CHEBI:60240"/>
        <label>1</label>
        <note>in cluster B</note>
    </ligand>
</feature>
<feature type="binding site" evidence="2">
    <location>
        <position position="23"/>
    </location>
    <ligand>
        <name>a divalent metal cation</name>
        <dbReference type="ChEBI" id="CHEBI:60240"/>
        <label>3</label>
        <note>in cluster B</note>
    </ligand>
</feature>
<feature type="binding site" evidence="2">
    <location>
        <position position="25"/>
    </location>
    <ligand>
        <name>a divalent metal cation</name>
        <dbReference type="ChEBI" id="CHEBI:60240"/>
        <label>2</label>
        <note>in cluster B</note>
    </ligand>
</feature>
<feature type="binding site" evidence="2">
    <location>
        <position position="28"/>
    </location>
    <ligand>
        <name>a divalent metal cation</name>
        <dbReference type="ChEBI" id="CHEBI:60240"/>
        <label>3</label>
        <note>in cluster B</note>
    </ligand>
</feature>
<feature type="binding site" evidence="2">
    <location>
        <position position="33"/>
    </location>
    <ligand>
        <name>a divalent metal cation</name>
        <dbReference type="ChEBI" id="CHEBI:60240"/>
        <label>4</label>
        <note>in cluster A</note>
    </ligand>
</feature>
<feature type="binding site" evidence="2">
    <location>
        <position position="34"/>
    </location>
    <ligand>
        <name>a divalent metal cation</name>
        <dbReference type="ChEBI" id="CHEBI:60240"/>
        <label>4</label>
        <note>in cluster A</note>
    </ligand>
</feature>
<feature type="binding site" evidence="2">
    <location>
        <position position="34"/>
    </location>
    <ligand>
        <name>a divalent metal cation</name>
        <dbReference type="ChEBI" id="CHEBI:60240"/>
        <label>5</label>
        <note>in cluster A</note>
    </ligand>
</feature>
<feature type="binding site" evidence="2">
    <location>
        <position position="36"/>
    </location>
    <ligand>
        <name>a divalent metal cation</name>
        <dbReference type="ChEBI" id="CHEBI:60240"/>
        <label>5</label>
        <note>in cluster A</note>
    </ligand>
</feature>
<feature type="binding site" evidence="2">
    <location>
        <position position="37"/>
    </location>
    <ligand>
        <name>a divalent metal cation</name>
        <dbReference type="ChEBI" id="CHEBI:60240"/>
        <label>5</label>
        <note>in cluster A</note>
    </ligand>
</feature>
<feature type="binding site" evidence="2">
    <location>
        <position position="37"/>
    </location>
    <ligand>
        <name>a divalent metal cation</name>
        <dbReference type="ChEBI" id="CHEBI:60240"/>
        <label>6</label>
        <note>in cluster A</note>
    </ligand>
</feature>
<feature type="binding site" evidence="2">
    <location>
        <position position="41"/>
    </location>
    <ligand>
        <name>a divalent metal cation</name>
        <dbReference type="ChEBI" id="CHEBI:60240"/>
        <label>6</label>
        <note>in cluster A</note>
    </ligand>
</feature>
<feature type="binding site" evidence="2">
    <location>
        <position position="44"/>
    </location>
    <ligand>
        <name>a divalent metal cation</name>
        <dbReference type="ChEBI" id="CHEBI:60240"/>
        <label>4</label>
        <note>in cluster A</note>
    </ligand>
</feature>
<feature type="binding site" evidence="2">
    <location>
        <position position="44"/>
    </location>
    <ligand>
        <name>a divalent metal cation</name>
        <dbReference type="ChEBI" id="CHEBI:60240"/>
        <label>6</label>
        <note>in cluster A</note>
    </ligand>
</feature>
<feature type="binding site" evidence="2">
    <location>
        <position position="48"/>
    </location>
    <ligand>
        <name>a divalent metal cation</name>
        <dbReference type="ChEBI" id="CHEBI:60240"/>
        <label>4</label>
        <note>in cluster A</note>
    </ligand>
</feature>
<feature type="binding site" evidence="2">
    <location>
        <position position="50"/>
    </location>
    <ligand>
        <name>a divalent metal cation</name>
        <dbReference type="ChEBI" id="CHEBI:60240"/>
        <label>5</label>
        <note>in cluster A</note>
    </ligand>
</feature>
<feature type="binding site" evidence="2">
    <location>
        <position position="50"/>
    </location>
    <ligand>
        <name>a divalent metal cation</name>
        <dbReference type="ChEBI" id="CHEBI:60240"/>
        <label>7</label>
        <note>in cluster A</note>
    </ligand>
</feature>
<feature type="binding site" evidence="3">
    <location>
        <position position="55"/>
    </location>
    <ligand>
        <name>a divalent metal cation</name>
        <dbReference type="ChEBI" id="CHEBI:60240"/>
        <label>7</label>
        <note>in cluster A</note>
    </ligand>
</feature>
<feature type="binding site" evidence="2">
    <location>
        <position position="59"/>
    </location>
    <ligand>
        <name>a divalent metal cation</name>
        <dbReference type="ChEBI" id="CHEBI:60240"/>
        <label>7</label>
        <note>in cluster A</note>
    </ligand>
</feature>
<feature type="binding site" evidence="2">
    <location>
        <position position="60"/>
    </location>
    <ligand>
        <name>a divalent metal cation</name>
        <dbReference type="ChEBI" id="CHEBI:60240"/>
        <label>6</label>
        <note>in cluster A</note>
    </ligand>
</feature>
<feature type="binding site" evidence="2">
    <location>
        <position position="60"/>
    </location>
    <ligand>
        <name>a divalent metal cation</name>
        <dbReference type="ChEBI" id="CHEBI:60240"/>
        <label>7</label>
        <note>in cluster A</note>
    </ligand>
</feature>
<proteinExistence type="inferred from homology"/>
<name>MTA_ONCMY</name>
<protein>
    <recommendedName>
        <fullName>Metallothionein A</fullName>
        <shortName>MT-A</shortName>
    </recommendedName>
</protein>
<reference key="1">
    <citation type="journal article" date="1987" name="DNA">
        <title>The rainbow trout metallothioneins: molecular cloning and characterization of two distinct cDNA sequences.</title>
        <authorList>
            <person name="Bonham K."/>
            <person name="Zafarullah M."/>
            <person name="Gedamu L."/>
        </authorList>
    </citation>
    <scope>NUCLEOTIDE SEQUENCE [MRNA]</scope>
</reference>
<reference key="2">
    <citation type="journal article" date="1991" name="Biochim. Biophys. Acta">
        <title>Elucidation of cDNA sequences for metallothioneins from rainbow trout, stone loach and pike liver using the polymerase chain reaction.</title>
        <authorList>
            <person name="Kille P."/>
            <person name="Stephens P.E."/>
            <person name="Kay J."/>
        </authorList>
    </citation>
    <scope>NUCLEOTIDE SEQUENCE [MRNA]</scope>
    <source>
        <tissue>Liver</tissue>
    </source>
</reference>
<reference key="3">
    <citation type="journal article" date="1992" name="Gene">
        <title>Structure of the rainbow trout metallothionein A gene.</title>
        <authorList>
            <person name="Hong Y."/>
            <person name="Schartl M."/>
        </authorList>
    </citation>
    <scope>NUCLEOTIDE SEQUENCE [GENOMIC DNA]</scope>
</reference>
<accession>P68503</accession>
<accession>P09861</accession>
<evidence type="ECO:0000250" key="1"/>
<evidence type="ECO:0000250" key="2">
    <source>
        <dbReference type="UniProtKB" id="P02795"/>
    </source>
</evidence>
<evidence type="ECO:0000250" key="3">
    <source>
        <dbReference type="UniProtKB" id="P62339"/>
    </source>
</evidence>
<evidence type="ECO:0000305" key="4"/>
<gene>
    <name type="primary">mta</name>
</gene>
<keyword id="KW-0479">Metal-binding</keyword>
<keyword id="KW-0480">Metal-thiolate cluster</keyword>
<comment type="function">
    <text evidence="1">Metallothioneins have a high content of cysteine residues that bind various heavy metals.</text>
</comment>
<comment type="domain">
    <text>Class I metallothioneins contain 2 metal-binding domains: four divalent ions are chelated within cluster A of the alpha domain and are coordinated via cysteinyl thiolate bridges to 11 cysteine ligands. Cluster B, the corresponding region within the beta domain, can ligate three divalent ions to 9 cysteines.</text>
</comment>
<comment type="similarity">
    <text evidence="4">Belongs to the metallothionein superfamily. Type 1 family.</text>
</comment>
<dbReference type="EMBL" id="M18103">
    <property type="protein sequence ID" value="AAA49565.1"/>
    <property type="molecule type" value="mRNA"/>
</dbReference>
<dbReference type="EMBL" id="X59395">
    <property type="protein sequence ID" value="CAA42038.1"/>
    <property type="molecule type" value="mRNA"/>
</dbReference>
<dbReference type="EMBL" id="M81800">
    <property type="protein sequence ID" value="AAA49564.1"/>
    <property type="molecule type" value="Genomic_DNA"/>
</dbReference>
<dbReference type="PIR" id="JC1449">
    <property type="entry name" value="JC1449"/>
</dbReference>
<dbReference type="Ensembl" id="ENSOMYT00000142462.1">
    <property type="protein sequence ID" value="ENSOMYP00000117901.1"/>
    <property type="gene ID" value="ENSOMYG00000059738.1"/>
</dbReference>
<dbReference type="GeneTree" id="ENSGT00950000182967"/>
<dbReference type="Proteomes" id="UP000694395">
    <property type="component" value="Chromosome 1"/>
</dbReference>
<dbReference type="GO" id="GO:0046870">
    <property type="term" value="F:cadmium ion binding"/>
    <property type="evidence" value="ECO:0000314"/>
    <property type="project" value="AgBase"/>
</dbReference>
<dbReference type="GO" id="GO:0008270">
    <property type="term" value="F:zinc ion binding"/>
    <property type="evidence" value="ECO:0000314"/>
    <property type="project" value="AgBase"/>
</dbReference>
<dbReference type="GO" id="GO:0051259">
    <property type="term" value="P:protein complex oligomerization"/>
    <property type="evidence" value="ECO:0000314"/>
    <property type="project" value="AgBase"/>
</dbReference>
<dbReference type="GO" id="GO:0046686">
    <property type="term" value="P:response to cadmium ion"/>
    <property type="evidence" value="ECO:0000314"/>
    <property type="project" value="AgBase"/>
</dbReference>
<dbReference type="GO" id="GO:0046688">
    <property type="term" value="P:response to copper ion"/>
    <property type="evidence" value="ECO:0000314"/>
    <property type="project" value="AgBase"/>
</dbReference>
<dbReference type="GO" id="GO:0046689">
    <property type="term" value="P:response to mercury ion"/>
    <property type="evidence" value="ECO:0000314"/>
    <property type="project" value="AgBase"/>
</dbReference>
<dbReference type="GO" id="GO:0010043">
    <property type="term" value="P:response to zinc ion"/>
    <property type="evidence" value="ECO:0000314"/>
    <property type="project" value="AgBase"/>
</dbReference>
<dbReference type="FunFam" id="4.10.10.10:FF:000001">
    <property type="entry name" value="Metallothionein"/>
    <property type="match status" value="1"/>
</dbReference>
<dbReference type="Gene3D" id="4.10.10.10">
    <property type="entry name" value="Metallothionein Isoform II"/>
    <property type="match status" value="1"/>
</dbReference>
<dbReference type="InterPro" id="IPR017854">
    <property type="entry name" value="Metalthion_dom_sf"/>
</dbReference>
<dbReference type="InterPro" id="IPR023587">
    <property type="entry name" value="Metalthion_dom_sf_vert"/>
</dbReference>
<dbReference type="InterPro" id="IPR000006">
    <property type="entry name" value="Metalthion_vert"/>
</dbReference>
<dbReference type="InterPro" id="IPR018064">
    <property type="entry name" value="Metalthion_vert_metal_BS"/>
</dbReference>
<dbReference type="PANTHER" id="PTHR23299">
    <property type="entry name" value="METALLOTHIONEIN"/>
    <property type="match status" value="1"/>
</dbReference>
<dbReference type="PANTHER" id="PTHR23299:SF24">
    <property type="entry name" value="METALLOTHIONEIN-1X"/>
    <property type="match status" value="1"/>
</dbReference>
<dbReference type="Pfam" id="PF00131">
    <property type="entry name" value="Metallothio"/>
    <property type="match status" value="1"/>
</dbReference>
<dbReference type="PRINTS" id="PR00860">
    <property type="entry name" value="MTVERTEBRATE"/>
</dbReference>
<dbReference type="SUPFAM" id="SSF57868">
    <property type="entry name" value="Metallothionein"/>
    <property type="match status" value="1"/>
</dbReference>
<dbReference type="PROSITE" id="PS00203">
    <property type="entry name" value="METALLOTHIONEIN_VRT"/>
    <property type="match status" value="1"/>
</dbReference>
<sequence>MDPCECSKTGSCNCGGSCKCSNCACTSCKKASCCDCCPSGCSKCASGCVCKGKTCDTSCCQ</sequence>